<keyword id="KW-0963">Cytoplasm</keyword>
<keyword id="KW-0255">Endonuclease</keyword>
<keyword id="KW-0378">Hydrolase</keyword>
<keyword id="KW-0479">Metal-binding</keyword>
<keyword id="KW-0540">Nuclease</keyword>
<dbReference type="EC" id="3.1.-.-" evidence="1"/>
<dbReference type="EMBL" id="CP000743">
    <property type="protein sequence ID" value="ABR56303.1"/>
    <property type="molecule type" value="Genomic_DNA"/>
</dbReference>
<dbReference type="RefSeq" id="WP_011973435.1">
    <property type="nucleotide sequence ID" value="NC_009635.1"/>
</dbReference>
<dbReference type="SMR" id="A6UUY1"/>
<dbReference type="STRING" id="419665.Maeo_0720"/>
<dbReference type="GeneID" id="5327637"/>
<dbReference type="KEGG" id="mae:Maeo_0720"/>
<dbReference type="eggNOG" id="arCOG01741">
    <property type="taxonomic scope" value="Archaea"/>
</dbReference>
<dbReference type="HOGENOM" id="CLU_023334_0_0_2"/>
<dbReference type="OrthoDB" id="31300at2157"/>
<dbReference type="Proteomes" id="UP000001106">
    <property type="component" value="Chromosome"/>
</dbReference>
<dbReference type="GO" id="GO:0005737">
    <property type="term" value="C:cytoplasm"/>
    <property type="evidence" value="ECO:0007669"/>
    <property type="project" value="UniProtKB-SubCell"/>
</dbReference>
<dbReference type="GO" id="GO:0004519">
    <property type="term" value="F:endonuclease activity"/>
    <property type="evidence" value="ECO:0007669"/>
    <property type="project" value="UniProtKB-UniRule"/>
</dbReference>
<dbReference type="GO" id="GO:0046872">
    <property type="term" value="F:metal ion binding"/>
    <property type="evidence" value="ECO:0007669"/>
    <property type="project" value="UniProtKB-UniRule"/>
</dbReference>
<dbReference type="GO" id="GO:0070651">
    <property type="term" value="P:nonfunctional rRNA decay"/>
    <property type="evidence" value="ECO:0007669"/>
    <property type="project" value="TreeGrafter"/>
</dbReference>
<dbReference type="GO" id="GO:0070966">
    <property type="term" value="P:nuclear-transcribed mRNA catabolic process, no-go decay"/>
    <property type="evidence" value="ECO:0007669"/>
    <property type="project" value="InterPro"/>
</dbReference>
<dbReference type="GO" id="GO:0070481">
    <property type="term" value="P:nuclear-transcribed mRNA catabolic process, non-stop decay"/>
    <property type="evidence" value="ECO:0007669"/>
    <property type="project" value="InterPro"/>
</dbReference>
<dbReference type="GO" id="GO:0032790">
    <property type="term" value="P:ribosome disassembly"/>
    <property type="evidence" value="ECO:0007669"/>
    <property type="project" value="TreeGrafter"/>
</dbReference>
<dbReference type="GO" id="GO:0071025">
    <property type="term" value="P:RNA surveillance"/>
    <property type="evidence" value="ECO:0007669"/>
    <property type="project" value="InterPro"/>
</dbReference>
<dbReference type="FunFam" id="2.30.30.870:FF:000002">
    <property type="entry name" value="Protein pelota homolog"/>
    <property type="match status" value="1"/>
</dbReference>
<dbReference type="Gene3D" id="3.30.1330.30">
    <property type="match status" value="1"/>
</dbReference>
<dbReference type="Gene3D" id="3.30.420.60">
    <property type="entry name" value="eRF1 domain 2"/>
    <property type="match status" value="1"/>
</dbReference>
<dbReference type="Gene3D" id="2.30.30.870">
    <property type="entry name" value="Pelota, domain A"/>
    <property type="match status" value="1"/>
</dbReference>
<dbReference type="HAMAP" id="MF_01853">
    <property type="entry name" value="PelO"/>
    <property type="match status" value="1"/>
</dbReference>
<dbReference type="InterPro" id="IPR042226">
    <property type="entry name" value="eFR1_2_sf"/>
</dbReference>
<dbReference type="InterPro" id="IPR005140">
    <property type="entry name" value="eRF1_1_Pelota"/>
</dbReference>
<dbReference type="InterPro" id="IPR005141">
    <property type="entry name" value="eRF1_2"/>
</dbReference>
<dbReference type="InterPro" id="IPR005142">
    <property type="entry name" value="eRF1_3"/>
</dbReference>
<dbReference type="InterPro" id="IPR038069">
    <property type="entry name" value="Pelota/DOM34_N"/>
</dbReference>
<dbReference type="InterPro" id="IPR023521">
    <property type="entry name" value="Pelota_arc"/>
</dbReference>
<dbReference type="InterPro" id="IPR029064">
    <property type="entry name" value="Ribosomal_eL30-like_sf"/>
</dbReference>
<dbReference type="InterPro" id="IPR004405">
    <property type="entry name" value="Transl-rel_pelota"/>
</dbReference>
<dbReference type="NCBIfam" id="TIGR00111">
    <property type="entry name" value="pelota"/>
    <property type="match status" value="1"/>
</dbReference>
<dbReference type="PANTHER" id="PTHR10853">
    <property type="entry name" value="PELOTA"/>
    <property type="match status" value="1"/>
</dbReference>
<dbReference type="PANTHER" id="PTHR10853:SF0">
    <property type="entry name" value="PROTEIN PELOTA HOMOLOG"/>
    <property type="match status" value="1"/>
</dbReference>
<dbReference type="Pfam" id="PF03463">
    <property type="entry name" value="eRF1_1"/>
    <property type="match status" value="1"/>
</dbReference>
<dbReference type="Pfam" id="PF03464">
    <property type="entry name" value="eRF1_2"/>
    <property type="match status" value="1"/>
</dbReference>
<dbReference type="Pfam" id="PF03465">
    <property type="entry name" value="eRF1_3"/>
    <property type="match status" value="1"/>
</dbReference>
<dbReference type="SMART" id="SM01194">
    <property type="entry name" value="eRF1_1"/>
    <property type="match status" value="1"/>
</dbReference>
<dbReference type="SUPFAM" id="SSF159065">
    <property type="entry name" value="Dom34/Pelota N-terminal domain-like"/>
    <property type="match status" value="1"/>
</dbReference>
<dbReference type="SUPFAM" id="SSF55315">
    <property type="entry name" value="L30e-like"/>
    <property type="match status" value="1"/>
</dbReference>
<dbReference type="SUPFAM" id="SSF53137">
    <property type="entry name" value="Translational machinery components"/>
    <property type="match status" value="1"/>
</dbReference>
<accession>A6UUY1</accession>
<gene>
    <name evidence="1" type="primary">pelA</name>
    <name type="ordered locus">Maeo_0720</name>
</gene>
<feature type="chain" id="PRO_0000361794" description="Protein pelota homolog">
    <location>
        <begin position="1"/>
        <end position="348"/>
    </location>
</feature>
<sequence>MKIIKEIPEKNIIKVMPENLDDLWHLSNIILKNNAVSAMTERRTEDKGDKLRADRGTKRRVYLGVKAEKIKFDENTNRLRVSGPIIHGPEDVPIGSYHTIDIEPLKDVSIQKNWKKWDLQRLKDAENSAKKPKIIVVIMDDSDATVFIIRDYGVKEIGHIKSRLSKKLDYKRQDQENINYYNEILEVMSPYEGKILVAGPGFTKNNFQKYLSEKHKDMLQRVVFESTNHTGRLGLAEVLKSGIVDRIYGEARLSKETQLVNKLLEEISKKGLAVYGVDDVKNALNYSAIETLLITDEFLRKNRRILEDLINSVEAIGGSSIIISTEYDVGKQLKALGGIGGLLRFPIE</sequence>
<protein>
    <recommendedName>
        <fullName evidence="1">Protein pelota homolog</fullName>
        <ecNumber evidence="1">3.1.-.-</ecNumber>
    </recommendedName>
</protein>
<organism>
    <name type="scientific">Methanococcus aeolicus (strain ATCC BAA-1280 / DSM 17508 / OCM 812 / Nankai-3)</name>
    <dbReference type="NCBI Taxonomy" id="419665"/>
    <lineage>
        <taxon>Archaea</taxon>
        <taxon>Methanobacteriati</taxon>
        <taxon>Methanobacteriota</taxon>
        <taxon>Methanomada group</taxon>
        <taxon>Methanococci</taxon>
        <taxon>Methanococcales</taxon>
        <taxon>Methanococcaceae</taxon>
        <taxon>Methanococcus</taxon>
    </lineage>
</organism>
<evidence type="ECO:0000255" key="1">
    <source>
        <dbReference type="HAMAP-Rule" id="MF_01853"/>
    </source>
</evidence>
<comment type="function">
    <text evidence="1">May function in recognizing stalled ribosomes, interact with stem-loop structures in stalled mRNA molecules, and effect endonucleolytic cleavage of the mRNA. May play a role in the release non-functional ribosomes and degradation of damaged mRNAs. Has endoribonuclease activity.</text>
</comment>
<comment type="cofactor">
    <cofactor evidence="1">
        <name>a divalent metal cation</name>
        <dbReference type="ChEBI" id="CHEBI:60240"/>
    </cofactor>
</comment>
<comment type="subunit">
    <text evidence="1">Monomer.</text>
</comment>
<comment type="subcellular location">
    <subcellularLocation>
        <location evidence="1">Cytoplasm</location>
    </subcellularLocation>
</comment>
<comment type="domain">
    <text evidence="1">The N-terminal domain has the RNA-binding Sm fold. It harbors the endoribonuclease activity.</text>
</comment>
<comment type="similarity">
    <text evidence="1">Belongs to the eukaryotic release factor 1 family. Pelota subfamily.</text>
</comment>
<reference key="1">
    <citation type="submission" date="2007-06" db="EMBL/GenBank/DDBJ databases">
        <title>Complete sequence of Methanococcus aeolicus Nankai-3.</title>
        <authorList>
            <consortium name="US DOE Joint Genome Institute"/>
            <person name="Copeland A."/>
            <person name="Lucas S."/>
            <person name="Lapidus A."/>
            <person name="Barry K."/>
            <person name="Glavina del Rio T."/>
            <person name="Dalin E."/>
            <person name="Tice H."/>
            <person name="Pitluck S."/>
            <person name="Chain P."/>
            <person name="Malfatti S."/>
            <person name="Shin M."/>
            <person name="Vergez L."/>
            <person name="Schmutz J."/>
            <person name="Larimer F."/>
            <person name="Land M."/>
            <person name="Hauser L."/>
            <person name="Kyrpides N."/>
            <person name="Lykidis A."/>
            <person name="Sieprawska-Lupa M."/>
            <person name="Whitman W.B."/>
            <person name="Richardson P."/>
        </authorList>
    </citation>
    <scope>NUCLEOTIDE SEQUENCE [LARGE SCALE GENOMIC DNA]</scope>
    <source>
        <strain>ATCC BAA-1280 / DSM 17508 / OCM 812 / Nankai-3</strain>
    </source>
</reference>
<proteinExistence type="inferred from homology"/>
<name>PELO_META3</name>